<name>URE1_BRADU</name>
<dbReference type="EC" id="3.5.1.5" evidence="1"/>
<dbReference type="EMBL" id="BA000040">
    <property type="protein sequence ID" value="BAC46722.1"/>
    <property type="molecule type" value="Genomic_DNA"/>
</dbReference>
<dbReference type="RefSeq" id="NP_768097.1">
    <property type="nucleotide sequence ID" value="NC_004463.1"/>
</dbReference>
<dbReference type="SMR" id="Q89UG0"/>
<dbReference type="STRING" id="224911.AAV28_04230"/>
<dbReference type="EnsemblBacteria" id="BAC46722">
    <property type="protein sequence ID" value="BAC46722"/>
    <property type="gene ID" value="BAC46722"/>
</dbReference>
<dbReference type="KEGG" id="bja:blr1457"/>
<dbReference type="PATRIC" id="fig|224911.5.peg.1517"/>
<dbReference type="eggNOG" id="COG0804">
    <property type="taxonomic scope" value="Bacteria"/>
</dbReference>
<dbReference type="HOGENOM" id="CLU_000980_0_0_5"/>
<dbReference type="InParanoid" id="Q89UG0"/>
<dbReference type="OrthoDB" id="9802793at2"/>
<dbReference type="PhylomeDB" id="Q89UG0"/>
<dbReference type="UniPathway" id="UPA00258">
    <property type="reaction ID" value="UER00370"/>
</dbReference>
<dbReference type="Proteomes" id="UP000002526">
    <property type="component" value="Chromosome"/>
</dbReference>
<dbReference type="GO" id="GO:0005737">
    <property type="term" value="C:cytoplasm"/>
    <property type="evidence" value="ECO:0007669"/>
    <property type="project" value="UniProtKB-SubCell"/>
</dbReference>
<dbReference type="GO" id="GO:0016151">
    <property type="term" value="F:nickel cation binding"/>
    <property type="evidence" value="ECO:0007669"/>
    <property type="project" value="UniProtKB-UniRule"/>
</dbReference>
<dbReference type="GO" id="GO:0009039">
    <property type="term" value="F:urease activity"/>
    <property type="evidence" value="ECO:0007669"/>
    <property type="project" value="UniProtKB-UniRule"/>
</dbReference>
<dbReference type="GO" id="GO:0043419">
    <property type="term" value="P:urea catabolic process"/>
    <property type="evidence" value="ECO:0007669"/>
    <property type="project" value="UniProtKB-UniRule"/>
</dbReference>
<dbReference type="CDD" id="cd00375">
    <property type="entry name" value="Urease_alpha"/>
    <property type="match status" value="1"/>
</dbReference>
<dbReference type="Gene3D" id="3.20.20.140">
    <property type="entry name" value="Metal-dependent hydrolases"/>
    <property type="match status" value="1"/>
</dbReference>
<dbReference type="Gene3D" id="2.30.40.10">
    <property type="entry name" value="Urease, subunit C, domain 1"/>
    <property type="match status" value="1"/>
</dbReference>
<dbReference type="HAMAP" id="MF_01953">
    <property type="entry name" value="Urease_alpha"/>
    <property type="match status" value="1"/>
</dbReference>
<dbReference type="InterPro" id="IPR006680">
    <property type="entry name" value="Amidohydro-rel"/>
</dbReference>
<dbReference type="InterPro" id="IPR011059">
    <property type="entry name" value="Metal-dep_hydrolase_composite"/>
</dbReference>
<dbReference type="InterPro" id="IPR032466">
    <property type="entry name" value="Metal_Hydrolase"/>
</dbReference>
<dbReference type="InterPro" id="IPR011612">
    <property type="entry name" value="Urease_alpha_N_dom"/>
</dbReference>
<dbReference type="InterPro" id="IPR050112">
    <property type="entry name" value="Urease_alpha_subunit"/>
</dbReference>
<dbReference type="InterPro" id="IPR017950">
    <property type="entry name" value="Urease_AS"/>
</dbReference>
<dbReference type="InterPro" id="IPR005848">
    <property type="entry name" value="Urease_asu"/>
</dbReference>
<dbReference type="InterPro" id="IPR017951">
    <property type="entry name" value="Urease_asu_c"/>
</dbReference>
<dbReference type="InterPro" id="IPR029754">
    <property type="entry name" value="Urease_Ni-bd"/>
</dbReference>
<dbReference type="NCBIfam" id="NF009685">
    <property type="entry name" value="PRK13206.1"/>
    <property type="match status" value="1"/>
</dbReference>
<dbReference type="NCBIfam" id="NF009686">
    <property type="entry name" value="PRK13207.1"/>
    <property type="match status" value="1"/>
</dbReference>
<dbReference type="NCBIfam" id="TIGR01792">
    <property type="entry name" value="urease_alph"/>
    <property type="match status" value="1"/>
</dbReference>
<dbReference type="PANTHER" id="PTHR43440">
    <property type="entry name" value="UREASE"/>
    <property type="match status" value="1"/>
</dbReference>
<dbReference type="PANTHER" id="PTHR43440:SF1">
    <property type="entry name" value="UREASE"/>
    <property type="match status" value="1"/>
</dbReference>
<dbReference type="Pfam" id="PF01979">
    <property type="entry name" value="Amidohydro_1"/>
    <property type="match status" value="1"/>
</dbReference>
<dbReference type="Pfam" id="PF00449">
    <property type="entry name" value="Urease_alpha"/>
    <property type="match status" value="1"/>
</dbReference>
<dbReference type="PRINTS" id="PR01752">
    <property type="entry name" value="UREASE"/>
</dbReference>
<dbReference type="SUPFAM" id="SSF51338">
    <property type="entry name" value="Composite domain of metallo-dependent hydrolases"/>
    <property type="match status" value="2"/>
</dbReference>
<dbReference type="SUPFAM" id="SSF51556">
    <property type="entry name" value="Metallo-dependent hydrolases"/>
    <property type="match status" value="1"/>
</dbReference>
<dbReference type="PROSITE" id="PS01120">
    <property type="entry name" value="UREASE_1"/>
    <property type="match status" value="1"/>
</dbReference>
<dbReference type="PROSITE" id="PS00145">
    <property type="entry name" value="UREASE_2"/>
    <property type="match status" value="1"/>
</dbReference>
<dbReference type="PROSITE" id="PS51368">
    <property type="entry name" value="UREASE_3"/>
    <property type="match status" value="1"/>
</dbReference>
<accession>Q89UG0</accession>
<gene>
    <name evidence="1" type="primary">ureC</name>
    <name type="ordered locus">blr1457</name>
</gene>
<comment type="catalytic activity">
    <reaction evidence="1">
        <text>urea + 2 H2O + H(+) = hydrogencarbonate + 2 NH4(+)</text>
        <dbReference type="Rhea" id="RHEA:20557"/>
        <dbReference type="ChEBI" id="CHEBI:15377"/>
        <dbReference type="ChEBI" id="CHEBI:15378"/>
        <dbReference type="ChEBI" id="CHEBI:16199"/>
        <dbReference type="ChEBI" id="CHEBI:17544"/>
        <dbReference type="ChEBI" id="CHEBI:28938"/>
        <dbReference type="EC" id="3.5.1.5"/>
    </reaction>
</comment>
<comment type="cofactor">
    <cofactor evidence="1">
        <name>Ni cation</name>
        <dbReference type="ChEBI" id="CHEBI:25516"/>
    </cofactor>
    <text evidence="1">Binds 2 nickel ions per subunit.</text>
</comment>
<comment type="pathway">
    <text evidence="1">Nitrogen metabolism; urea degradation; CO(2) and NH(3) from urea (urease route): step 1/1.</text>
</comment>
<comment type="subunit">
    <text evidence="1">Heterotrimer of UreA (gamma), UreB (beta) and UreC (alpha) subunits. Three heterotrimers associate to form the active enzyme.</text>
</comment>
<comment type="subcellular location">
    <subcellularLocation>
        <location evidence="1">Cytoplasm</location>
    </subcellularLocation>
</comment>
<comment type="PTM">
    <text evidence="1">Carboxylation allows a single lysine to coordinate two nickel ions.</text>
</comment>
<comment type="similarity">
    <text evidence="1">Belongs to the metallo-dependent hydrolases superfamily. Urease alpha subunit family.</text>
</comment>
<feature type="chain" id="PRO_0000234138" description="Urease subunit alpha">
    <location>
        <begin position="1"/>
        <end position="572"/>
    </location>
</feature>
<feature type="domain" description="Urease" evidence="1">
    <location>
        <begin position="132"/>
        <end position="572"/>
    </location>
</feature>
<feature type="active site" description="Proton donor" evidence="1">
    <location>
        <position position="323"/>
    </location>
</feature>
<feature type="binding site" evidence="1">
    <location>
        <position position="137"/>
    </location>
    <ligand>
        <name>Ni(2+)</name>
        <dbReference type="ChEBI" id="CHEBI:49786"/>
        <label>1</label>
    </ligand>
</feature>
<feature type="binding site" evidence="1">
    <location>
        <position position="139"/>
    </location>
    <ligand>
        <name>Ni(2+)</name>
        <dbReference type="ChEBI" id="CHEBI:49786"/>
        <label>1</label>
    </ligand>
</feature>
<feature type="binding site" description="via carbamate group" evidence="1">
    <location>
        <position position="220"/>
    </location>
    <ligand>
        <name>Ni(2+)</name>
        <dbReference type="ChEBI" id="CHEBI:49786"/>
        <label>1</label>
    </ligand>
</feature>
<feature type="binding site" description="via carbamate group" evidence="1">
    <location>
        <position position="220"/>
    </location>
    <ligand>
        <name>Ni(2+)</name>
        <dbReference type="ChEBI" id="CHEBI:49786"/>
        <label>2</label>
    </ligand>
</feature>
<feature type="binding site" evidence="1">
    <location>
        <position position="222"/>
    </location>
    <ligand>
        <name>substrate</name>
    </ligand>
</feature>
<feature type="binding site" evidence="1">
    <location>
        <position position="249"/>
    </location>
    <ligand>
        <name>Ni(2+)</name>
        <dbReference type="ChEBI" id="CHEBI:49786"/>
        <label>2</label>
    </ligand>
</feature>
<feature type="binding site" evidence="1">
    <location>
        <position position="275"/>
    </location>
    <ligand>
        <name>Ni(2+)</name>
        <dbReference type="ChEBI" id="CHEBI:49786"/>
        <label>2</label>
    </ligand>
</feature>
<feature type="binding site" evidence="1">
    <location>
        <position position="363"/>
    </location>
    <ligand>
        <name>Ni(2+)</name>
        <dbReference type="ChEBI" id="CHEBI:49786"/>
        <label>1</label>
    </ligand>
</feature>
<feature type="modified residue" description="N6-carboxylysine" evidence="1">
    <location>
        <position position="220"/>
    </location>
</feature>
<reference key="1">
    <citation type="journal article" date="2002" name="DNA Res.">
        <title>Complete genomic sequence of nitrogen-fixing symbiotic bacterium Bradyrhizobium japonicum USDA110.</title>
        <authorList>
            <person name="Kaneko T."/>
            <person name="Nakamura Y."/>
            <person name="Sato S."/>
            <person name="Minamisawa K."/>
            <person name="Uchiumi T."/>
            <person name="Sasamoto S."/>
            <person name="Watanabe A."/>
            <person name="Idesawa K."/>
            <person name="Iriguchi M."/>
            <person name="Kawashima K."/>
            <person name="Kohara M."/>
            <person name="Matsumoto M."/>
            <person name="Shimpo S."/>
            <person name="Tsuruoka H."/>
            <person name="Wada T."/>
            <person name="Yamada M."/>
            <person name="Tabata S."/>
        </authorList>
    </citation>
    <scope>NUCLEOTIDE SEQUENCE [LARGE SCALE GENOMIC DNA]</scope>
    <source>
        <strain>JCM 10833 / BCRC 13528 / IAM 13628 / NBRC 14792 / USDA 110</strain>
    </source>
</reference>
<organism>
    <name type="scientific">Bradyrhizobium diazoefficiens (strain JCM 10833 / BCRC 13528 / IAM 13628 / NBRC 14792 / USDA 110)</name>
    <dbReference type="NCBI Taxonomy" id="224911"/>
    <lineage>
        <taxon>Bacteria</taxon>
        <taxon>Pseudomonadati</taxon>
        <taxon>Pseudomonadota</taxon>
        <taxon>Alphaproteobacteria</taxon>
        <taxon>Hyphomicrobiales</taxon>
        <taxon>Nitrobacteraceae</taxon>
        <taxon>Bradyrhizobium</taxon>
    </lineage>
</organism>
<sequence length="572" mass="61277">MMSVKIKRSVYADMFGPTTGDKVRLADTDLIIEVEKDFTVYGEEVKFGGGKVIRDGMGQSQVTNKQGAADTVITNALIVDHWGIVKADVAIKDGMISAIGKAGNPDIQPGVTIIIGPGTDVIAGEGKILTAGGFDSHIHFICPQQIEHALMSGVTSMLGGGTGPSHGTFATTCTPGPWHMGRMIQSFDAFPVNLGISGKGNASRPAPLVEMIKGGACALKLHEDWGTTPAAIDNCLSVADDYDIQVMIHTDTLNESGFVEDTIKAFKGRTIHAFHTEGAGGGHAPDIIKVAGLKNVLPSSTNPTRPFTRNTIDEHLDMLMVCHHLDPSIAEDLAFAESRIRKETIAAEDILHDLGALSMMSSDSQAMGRLGEVIIRTWQTADKMKKQRGSLPQDKGKDNDNFRVKRYIAKYTINPAIAHGVSKLIGSVEKGKLADLVLWSPAFFGVKPDCIVKGGTIVAAPMGDPNASIPTPQPVHYQPMFGAFGKARTASSVVFTSKAAITGGLARKLGIEKKLYAVQNTRGRISKKSMIHNDATPNIEVDPETYEVRADGELLTCAPAEVLPMAQRYFMY</sequence>
<evidence type="ECO:0000255" key="1">
    <source>
        <dbReference type="HAMAP-Rule" id="MF_01953"/>
    </source>
</evidence>
<protein>
    <recommendedName>
        <fullName evidence="1">Urease subunit alpha</fullName>
        <ecNumber evidence="1">3.5.1.5</ecNumber>
    </recommendedName>
    <alternativeName>
        <fullName evidence="1">Urea amidohydrolase subunit alpha</fullName>
    </alternativeName>
</protein>
<keyword id="KW-0963">Cytoplasm</keyword>
<keyword id="KW-0378">Hydrolase</keyword>
<keyword id="KW-0479">Metal-binding</keyword>
<keyword id="KW-0533">Nickel</keyword>
<keyword id="KW-1185">Reference proteome</keyword>
<proteinExistence type="inferred from homology"/>